<dbReference type="EMBL" id="BA000045">
    <property type="protein sequence ID" value="BAC90579.1"/>
    <property type="molecule type" value="Genomic_DNA"/>
</dbReference>
<dbReference type="RefSeq" id="NP_925584.1">
    <property type="nucleotide sequence ID" value="NC_005125.1"/>
</dbReference>
<dbReference type="SMR" id="Q7NH99"/>
<dbReference type="STRING" id="251221.gene:10760139"/>
<dbReference type="EnsemblBacteria" id="BAC90579">
    <property type="protein sequence ID" value="BAC90579"/>
    <property type="gene ID" value="BAC90579"/>
</dbReference>
<dbReference type="KEGG" id="gvi:gsl2638"/>
<dbReference type="PATRIC" id="fig|251221.4.peg.2675"/>
<dbReference type="eggNOG" id="COG0228">
    <property type="taxonomic scope" value="Bacteria"/>
</dbReference>
<dbReference type="HOGENOM" id="CLU_100590_5_0_3"/>
<dbReference type="InParanoid" id="Q7NH99"/>
<dbReference type="OrthoDB" id="9807878at2"/>
<dbReference type="PhylomeDB" id="Q7NH99"/>
<dbReference type="Proteomes" id="UP000000557">
    <property type="component" value="Chromosome"/>
</dbReference>
<dbReference type="GO" id="GO:0005737">
    <property type="term" value="C:cytoplasm"/>
    <property type="evidence" value="ECO:0007669"/>
    <property type="project" value="UniProtKB-ARBA"/>
</dbReference>
<dbReference type="GO" id="GO:0015935">
    <property type="term" value="C:small ribosomal subunit"/>
    <property type="evidence" value="ECO:0000318"/>
    <property type="project" value="GO_Central"/>
</dbReference>
<dbReference type="GO" id="GO:0003735">
    <property type="term" value="F:structural constituent of ribosome"/>
    <property type="evidence" value="ECO:0000318"/>
    <property type="project" value="GO_Central"/>
</dbReference>
<dbReference type="GO" id="GO:0006412">
    <property type="term" value="P:translation"/>
    <property type="evidence" value="ECO:0007669"/>
    <property type="project" value="UniProtKB-UniRule"/>
</dbReference>
<dbReference type="Gene3D" id="3.30.1320.10">
    <property type="match status" value="1"/>
</dbReference>
<dbReference type="HAMAP" id="MF_00385">
    <property type="entry name" value="Ribosomal_bS16"/>
    <property type="match status" value="1"/>
</dbReference>
<dbReference type="InterPro" id="IPR000307">
    <property type="entry name" value="Ribosomal_bS16"/>
</dbReference>
<dbReference type="InterPro" id="IPR023803">
    <property type="entry name" value="Ribosomal_bS16_dom_sf"/>
</dbReference>
<dbReference type="NCBIfam" id="TIGR00002">
    <property type="entry name" value="S16"/>
    <property type="match status" value="1"/>
</dbReference>
<dbReference type="PANTHER" id="PTHR12919">
    <property type="entry name" value="30S RIBOSOMAL PROTEIN S16"/>
    <property type="match status" value="1"/>
</dbReference>
<dbReference type="PANTHER" id="PTHR12919:SF20">
    <property type="entry name" value="SMALL RIBOSOMAL SUBUNIT PROTEIN BS16M"/>
    <property type="match status" value="1"/>
</dbReference>
<dbReference type="Pfam" id="PF00886">
    <property type="entry name" value="Ribosomal_S16"/>
    <property type="match status" value="1"/>
</dbReference>
<dbReference type="SUPFAM" id="SSF54565">
    <property type="entry name" value="Ribosomal protein S16"/>
    <property type="match status" value="1"/>
</dbReference>
<keyword id="KW-1185">Reference proteome</keyword>
<keyword id="KW-0687">Ribonucleoprotein</keyword>
<keyword id="KW-0689">Ribosomal protein</keyword>
<feature type="chain" id="PRO_0000167190" description="Small ribosomal subunit protein bS16">
    <location>
        <begin position="1"/>
        <end position="89"/>
    </location>
</feature>
<sequence>MKRIGAKKKPVYRIVVTDSRSRRDGAVIEEIGFYDPRANTEKGLPEVTLDVEAARRWLSHGARPSETVQGLLKRAQVYASPSSSTPDSD</sequence>
<gene>
    <name evidence="1" type="primary">rpsP</name>
    <name evidence="1" type="synonym">rps16</name>
    <name type="ordered locus">gsl2638</name>
</gene>
<accession>Q7NH99</accession>
<reference key="1">
    <citation type="journal article" date="2003" name="DNA Res.">
        <title>Complete genome structure of Gloeobacter violaceus PCC 7421, a cyanobacterium that lacks thylakoids.</title>
        <authorList>
            <person name="Nakamura Y."/>
            <person name="Kaneko T."/>
            <person name="Sato S."/>
            <person name="Mimuro M."/>
            <person name="Miyashita H."/>
            <person name="Tsuchiya T."/>
            <person name="Sasamoto S."/>
            <person name="Watanabe A."/>
            <person name="Kawashima K."/>
            <person name="Kishida Y."/>
            <person name="Kiyokawa C."/>
            <person name="Kohara M."/>
            <person name="Matsumoto M."/>
            <person name="Matsuno A."/>
            <person name="Nakazaki N."/>
            <person name="Shimpo S."/>
            <person name="Takeuchi C."/>
            <person name="Yamada M."/>
            <person name="Tabata S."/>
        </authorList>
    </citation>
    <scope>NUCLEOTIDE SEQUENCE [LARGE SCALE GENOMIC DNA]</scope>
    <source>
        <strain>ATCC 29082 / PCC 7421</strain>
    </source>
</reference>
<evidence type="ECO:0000255" key="1">
    <source>
        <dbReference type="HAMAP-Rule" id="MF_00385"/>
    </source>
</evidence>
<evidence type="ECO:0000305" key="2"/>
<protein>
    <recommendedName>
        <fullName evidence="1">Small ribosomal subunit protein bS16</fullName>
    </recommendedName>
    <alternativeName>
        <fullName evidence="2">30S ribosomal protein S16</fullName>
    </alternativeName>
</protein>
<proteinExistence type="inferred from homology"/>
<comment type="similarity">
    <text evidence="1">Belongs to the bacterial ribosomal protein bS16 family.</text>
</comment>
<organism>
    <name type="scientific">Gloeobacter violaceus (strain ATCC 29082 / PCC 7421)</name>
    <dbReference type="NCBI Taxonomy" id="251221"/>
    <lineage>
        <taxon>Bacteria</taxon>
        <taxon>Bacillati</taxon>
        <taxon>Cyanobacteriota</taxon>
        <taxon>Cyanophyceae</taxon>
        <taxon>Gloeobacterales</taxon>
        <taxon>Gloeobacteraceae</taxon>
        <taxon>Gloeobacter</taxon>
    </lineage>
</organism>
<name>RS16_GLOVI</name>